<protein>
    <recommendedName>
        <fullName evidence="1">Acetylglutamate kinase</fullName>
        <ecNumber evidence="1">2.7.2.8</ecNumber>
    </recommendedName>
    <alternativeName>
        <fullName evidence="1">N-acetyl-L-glutamate 5-phosphotransferase</fullName>
    </alternativeName>
    <alternativeName>
        <fullName evidence="1">NAG kinase</fullName>
        <shortName evidence="1">NAGK</shortName>
    </alternativeName>
</protein>
<organism>
    <name type="scientific">Methanosarcina mazei (strain ATCC BAA-159 / DSM 3647 / Goe1 / Go1 / JCM 11833 / OCM 88)</name>
    <name type="common">Methanosarcina frisia</name>
    <dbReference type="NCBI Taxonomy" id="192952"/>
    <lineage>
        <taxon>Archaea</taxon>
        <taxon>Methanobacteriati</taxon>
        <taxon>Methanobacteriota</taxon>
        <taxon>Stenosarchaea group</taxon>
        <taxon>Methanomicrobia</taxon>
        <taxon>Methanosarcinales</taxon>
        <taxon>Methanosarcinaceae</taxon>
        <taxon>Methanosarcina</taxon>
    </lineage>
</organism>
<feature type="chain" id="PRO_0000112696" description="Acetylglutamate kinase">
    <location>
        <begin position="1"/>
        <end position="292"/>
    </location>
</feature>
<feature type="binding site" evidence="1">
    <location>
        <begin position="62"/>
        <end position="63"/>
    </location>
    <ligand>
        <name>substrate</name>
    </ligand>
</feature>
<feature type="binding site" evidence="1">
    <location>
        <position position="84"/>
    </location>
    <ligand>
        <name>substrate</name>
    </ligand>
</feature>
<feature type="binding site" evidence="1">
    <location>
        <position position="188"/>
    </location>
    <ligand>
        <name>substrate</name>
    </ligand>
</feature>
<feature type="site" description="Transition state stabilizer" evidence="1">
    <location>
        <position position="27"/>
    </location>
</feature>
<feature type="site" description="Transition state stabilizer" evidence="1">
    <location>
        <position position="251"/>
    </location>
</feature>
<keyword id="KW-0028">Amino-acid biosynthesis</keyword>
<keyword id="KW-0055">Arginine biosynthesis</keyword>
<keyword id="KW-0067">ATP-binding</keyword>
<keyword id="KW-0963">Cytoplasm</keyword>
<keyword id="KW-0418">Kinase</keyword>
<keyword id="KW-0547">Nucleotide-binding</keyword>
<keyword id="KW-0808">Transferase</keyword>
<accession>Q8PXJ8</accession>
<proteinExistence type="inferred from homology"/>
<gene>
    <name evidence="1" type="primary">argB</name>
    <name type="ordered locus">MM_1220</name>
</gene>
<comment type="function">
    <text evidence="1">Catalyzes the ATP-dependent phosphorylation of N-acetyl-L-glutamate.</text>
</comment>
<comment type="catalytic activity">
    <reaction evidence="1">
        <text>N-acetyl-L-glutamate + ATP = N-acetyl-L-glutamyl 5-phosphate + ADP</text>
        <dbReference type="Rhea" id="RHEA:14629"/>
        <dbReference type="ChEBI" id="CHEBI:30616"/>
        <dbReference type="ChEBI" id="CHEBI:44337"/>
        <dbReference type="ChEBI" id="CHEBI:57936"/>
        <dbReference type="ChEBI" id="CHEBI:456216"/>
        <dbReference type="EC" id="2.7.2.8"/>
    </reaction>
</comment>
<comment type="pathway">
    <text evidence="1">Amino-acid biosynthesis; L-arginine biosynthesis; N(2)-acetyl-L-ornithine from L-glutamate: step 2/4.</text>
</comment>
<comment type="subcellular location">
    <subcellularLocation>
        <location evidence="1">Cytoplasm</location>
    </subcellularLocation>
</comment>
<comment type="similarity">
    <text evidence="1">Belongs to the acetylglutamate kinase family. ArgB subfamily.</text>
</comment>
<sequence>MELKRENVLIEALPYMQEFYDSIMVIKVGGNAMVSAQIMEDIIKDIVLLRYVGIKPVIVHGGGPEITEKMERMGKKAEFFQGLRITDDETMEIARMVLVGNINTKIVSLIGLFGGKGVGFTGYDGRMILGHKQAAKHVLIDGVETEVDIGWVGESEVINPEILHIMLEKGYIPVISPIAVDAKGNALNINADTVAGDIAAALHAKKLILMTDVSGLLRNIKDPGSRISRVKLDDIDLLIEEGVISGGMIPKIKGAAVAVKSGVERAHIINGSVSHSMLLELFTDGGVGTMIY</sequence>
<dbReference type="EC" id="2.7.2.8" evidence="1"/>
<dbReference type="EMBL" id="AE008384">
    <property type="protein sequence ID" value="AAM30916.1"/>
    <property type="molecule type" value="Genomic_DNA"/>
</dbReference>
<dbReference type="RefSeq" id="WP_011033169.1">
    <property type="nucleotide sequence ID" value="NC_003901.1"/>
</dbReference>
<dbReference type="SMR" id="Q8PXJ8"/>
<dbReference type="GeneID" id="82160255"/>
<dbReference type="KEGG" id="mma:MM_1220"/>
<dbReference type="PATRIC" id="fig|192952.21.peg.1425"/>
<dbReference type="eggNOG" id="arCOG00862">
    <property type="taxonomic scope" value="Archaea"/>
</dbReference>
<dbReference type="HOGENOM" id="CLU_053680_0_0_2"/>
<dbReference type="UniPathway" id="UPA00068">
    <property type="reaction ID" value="UER00107"/>
</dbReference>
<dbReference type="Proteomes" id="UP000000595">
    <property type="component" value="Chromosome"/>
</dbReference>
<dbReference type="GO" id="GO:0005737">
    <property type="term" value="C:cytoplasm"/>
    <property type="evidence" value="ECO:0007669"/>
    <property type="project" value="UniProtKB-SubCell"/>
</dbReference>
<dbReference type="GO" id="GO:0003991">
    <property type="term" value="F:acetylglutamate kinase activity"/>
    <property type="evidence" value="ECO:0007669"/>
    <property type="project" value="UniProtKB-UniRule"/>
</dbReference>
<dbReference type="GO" id="GO:0005524">
    <property type="term" value="F:ATP binding"/>
    <property type="evidence" value="ECO:0007669"/>
    <property type="project" value="UniProtKB-UniRule"/>
</dbReference>
<dbReference type="GO" id="GO:0042450">
    <property type="term" value="P:arginine biosynthetic process via ornithine"/>
    <property type="evidence" value="ECO:0007669"/>
    <property type="project" value="UniProtKB-UniRule"/>
</dbReference>
<dbReference type="GO" id="GO:0006526">
    <property type="term" value="P:L-arginine biosynthetic process"/>
    <property type="evidence" value="ECO:0007669"/>
    <property type="project" value="UniProtKB-UniPathway"/>
</dbReference>
<dbReference type="CDD" id="cd04250">
    <property type="entry name" value="AAK_NAGK-C"/>
    <property type="match status" value="1"/>
</dbReference>
<dbReference type="FunFam" id="3.40.1160.10:FF:000004">
    <property type="entry name" value="Acetylglutamate kinase"/>
    <property type="match status" value="1"/>
</dbReference>
<dbReference type="Gene3D" id="3.40.1160.10">
    <property type="entry name" value="Acetylglutamate kinase-like"/>
    <property type="match status" value="1"/>
</dbReference>
<dbReference type="HAMAP" id="MF_00082">
    <property type="entry name" value="ArgB"/>
    <property type="match status" value="1"/>
</dbReference>
<dbReference type="InterPro" id="IPR036393">
    <property type="entry name" value="AceGlu_kinase-like_sf"/>
</dbReference>
<dbReference type="InterPro" id="IPR004662">
    <property type="entry name" value="AcgluKinase_fam"/>
</dbReference>
<dbReference type="InterPro" id="IPR037528">
    <property type="entry name" value="ArgB"/>
</dbReference>
<dbReference type="InterPro" id="IPR001048">
    <property type="entry name" value="Asp/Glu/Uridylate_kinase"/>
</dbReference>
<dbReference type="InterPro" id="IPR001057">
    <property type="entry name" value="Glu/AcGlu_kinase"/>
</dbReference>
<dbReference type="InterPro" id="IPR041727">
    <property type="entry name" value="NAGK-C"/>
</dbReference>
<dbReference type="NCBIfam" id="TIGR00761">
    <property type="entry name" value="argB"/>
    <property type="match status" value="1"/>
</dbReference>
<dbReference type="PANTHER" id="PTHR23342">
    <property type="entry name" value="N-ACETYLGLUTAMATE SYNTHASE"/>
    <property type="match status" value="1"/>
</dbReference>
<dbReference type="PANTHER" id="PTHR23342:SF0">
    <property type="entry name" value="N-ACETYLGLUTAMATE SYNTHASE, MITOCHONDRIAL"/>
    <property type="match status" value="1"/>
</dbReference>
<dbReference type="Pfam" id="PF00696">
    <property type="entry name" value="AA_kinase"/>
    <property type="match status" value="1"/>
</dbReference>
<dbReference type="PIRSF" id="PIRSF000728">
    <property type="entry name" value="NAGK"/>
    <property type="match status" value="1"/>
</dbReference>
<dbReference type="PRINTS" id="PR00474">
    <property type="entry name" value="GLU5KINASE"/>
</dbReference>
<dbReference type="SUPFAM" id="SSF53633">
    <property type="entry name" value="Carbamate kinase-like"/>
    <property type="match status" value="1"/>
</dbReference>
<name>ARGB_METMA</name>
<reference key="1">
    <citation type="journal article" date="2002" name="J. Mol. Microbiol. Biotechnol.">
        <title>The genome of Methanosarcina mazei: evidence for lateral gene transfer between Bacteria and Archaea.</title>
        <authorList>
            <person name="Deppenmeier U."/>
            <person name="Johann A."/>
            <person name="Hartsch T."/>
            <person name="Merkl R."/>
            <person name="Schmitz R.A."/>
            <person name="Martinez-Arias R."/>
            <person name="Henne A."/>
            <person name="Wiezer A."/>
            <person name="Baeumer S."/>
            <person name="Jacobi C."/>
            <person name="Brueggemann H."/>
            <person name="Lienard T."/>
            <person name="Christmann A."/>
            <person name="Boemecke M."/>
            <person name="Steckel S."/>
            <person name="Bhattacharyya A."/>
            <person name="Lykidis A."/>
            <person name="Overbeek R."/>
            <person name="Klenk H.-P."/>
            <person name="Gunsalus R.P."/>
            <person name="Fritz H.-J."/>
            <person name="Gottschalk G."/>
        </authorList>
    </citation>
    <scope>NUCLEOTIDE SEQUENCE [LARGE SCALE GENOMIC DNA]</scope>
    <source>
        <strain>ATCC BAA-159 / DSM 3647 / Goe1 / Go1 / JCM 11833 / OCM 88</strain>
    </source>
</reference>
<evidence type="ECO:0000255" key="1">
    <source>
        <dbReference type="HAMAP-Rule" id="MF_00082"/>
    </source>
</evidence>